<gene>
    <name evidence="1" type="primary">ileS</name>
    <name type="ordered locus">MCCL_0764</name>
</gene>
<dbReference type="EC" id="6.1.1.5" evidence="1"/>
<dbReference type="EMBL" id="AP009484">
    <property type="protein sequence ID" value="BAH17471.1"/>
    <property type="molecule type" value="Genomic_DNA"/>
</dbReference>
<dbReference type="RefSeq" id="WP_012656672.1">
    <property type="nucleotide sequence ID" value="NC_011999.1"/>
</dbReference>
<dbReference type="SMR" id="B9EB60"/>
<dbReference type="STRING" id="458233.MCCL_0764"/>
<dbReference type="KEGG" id="mcl:MCCL_0764"/>
<dbReference type="eggNOG" id="COG0060">
    <property type="taxonomic scope" value="Bacteria"/>
</dbReference>
<dbReference type="HOGENOM" id="CLU_001493_7_1_9"/>
<dbReference type="OrthoDB" id="9810365at2"/>
<dbReference type="Proteomes" id="UP000001383">
    <property type="component" value="Chromosome"/>
</dbReference>
<dbReference type="GO" id="GO:0005829">
    <property type="term" value="C:cytosol"/>
    <property type="evidence" value="ECO:0007669"/>
    <property type="project" value="TreeGrafter"/>
</dbReference>
<dbReference type="GO" id="GO:0002161">
    <property type="term" value="F:aminoacyl-tRNA deacylase activity"/>
    <property type="evidence" value="ECO:0007669"/>
    <property type="project" value="InterPro"/>
</dbReference>
<dbReference type="GO" id="GO:0005524">
    <property type="term" value="F:ATP binding"/>
    <property type="evidence" value="ECO:0007669"/>
    <property type="project" value="UniProtKB-UniRule"/>
</dbReference>
<dbReference type="GO" id="GO:0004822">
    <property type="term" value="F:isoleucine-tRNA ligase activity"/>
    <property type="evidence" value="ECO:0007669"/>
    <property type="project" value="UniProtKB-UniRule"/>
</dbReference>
<dbReference type="GO" id="GO:0000049">
    <property type="term" value="F:tRNA binding"/>
    <property type="evidence" value="ECO:0007669"/>
    <property type="project" value="InterPro"/>
</dbReference>
<dbReference type="GO" id="GO:0008270">
    <property type="term" value="F:zinc ion binding"/>
    <property type="evidence" value="ECO:0007669"/>
    <property type="project" value="UniProtKB-UniRule"/>
</dbReference>
<dbReference type="GO" id="GO:0006428">
    <property type="term" value="P:isoleucyl-tRNA aminoacylation"/>
    <property type="evidence" value="ECO:0007669"/>
    <property type="project" value="UniProtKB-UniRule"/>
</dbReference>
<dbReference type="CDD" id="cd07960">
    <property type="entry name" value="Anticodon_Ia_Ile_BEm"/>
    <property type="match status" value="1"/>
</dbReference>
<dbReference type="CDD" id="cd00818">
    <property type="entry name" value="IleRS_core"/>
    <property type="match status" value="1"/>
</dbReference>
<dbReference type="FunFam" id="1.10.10.830:FF:000001">
    <property type="entry name" value="Isoleucine--tRNA ligase"/>
    <property type="match status" value="1"/>
</dbReference>
<dbReference type="FunFam" id="1.10.730.20:FF:000001">
    <property type="entry name" value="Isoleucine--tRNA ligase"/>
    <property type="match status" value="1"/>
</dbReference>
<dbReference type="FunFam" id="3.40.50.620:FF:000152">
    <property type="entry name" value="Isoleucine--tRNA ligase"/>
    <property type="match status" value="1"/>
</dbReference>
<dbReference type="FunFam" id="3.90.740.10:FF:000006">
    <property type="entry name" value="Isoleucine--tRNA ligase"/>
    <property type="match status" value="1"/>
</dbReference>
<dbReference type="Gene3D" id="1.10.730.20">
    <property type="match status" value="1"/>
</dbReference>
<dbReference type="Gene3D" id="3.40.50.620">
    <property type="entry name" value="HUPs"/>
    <property type="match status" value="2"/>
</dbReference>
<dbReference type="Gene3D" id="1.10.10.830">
    <property type="entry name" value="Ile-tRNA synthetase CP2 domain-like"/>
    <property type="match status" value="1"/>
</dbReference>
<dbReference type="HAMAP" id="MF_02002">
    <property type="entry name" value="Ile_tRNA_synth_type1"/>
    <property type="match status" value="1"/>
</dbReference>
<dbReference type="InterPro" id="IPR001412">
    <property type="entry name" value="aa-tRNA-synth_I_CS"/>
</dbReference>
<dbReference type="InterPro" id="IPR002300">
    <property type="entry name" value="aa-tRNA-synth_Ia"/>
</dbReference>
<dbReference type="InterPro" id="IPR033708">
    <property type="entry name" value="Anticodon_Ile_BEm"/>
</dbReference>
<dbReference type="InterPro" id="IPR002301">
    <property type="entry name" value="Ile-tRNA-ligase"/>
</dbReference>
<dbReference type="InterPro" id="IPR023585">
    <property type="entry name" value="Ile-tRNA-ligase_type1"/>
</dbReference>
<dbReference type="InterPro" id="IPR050081">
    <property type="entry name" value="Ile-tRNA_ligase"/>
</dbReference>
<dbReference type="InterPro" id="IPR013155">
    <property type="entry name" value="M/V/L/I-tRNA-synth_anticd-bd"/>
</dbReference>
<dbReference type="InterPro" id="IPR014729">
    <property type="entry name" value="Rossmann-like_a/b/a_fold"/>
</dbReference>
<dbReference type="InterPro" id="IPR009080">
    <property type="entry name" value="tRNAsynth_Ia_anticodon-bd"/>
</dbReference>
<dbReference type="InterPro" id="IPR009008">
    <property type="entry name" value="Val/Leu/Ile-tRNA-synth_edit"/>
</dbReference>
<dbReference type="InterPro" id="IPR010663">
    <property type="entry name" value="Znf_FPG/IleRS"/>
</dbReference>
<dbReference type="NCBIfam" id="TIGR00392">
    <property type="entry name" value="ileS"/>
    <property type="match status" value="1"/>
</dbReference>
<dbReference type="PANTHER" id="PTHR42765:SF1">
    <property type="entry name" value="ISOLEUCINE--TRNA LIGASE, MITOCHONDRIAL"/>
    <property type="match status" value="1"/>
</dbReference>
<dbReference type="PANTHER" id="PTHR42765">
    <property type="entry name" value="SOLEUCYL-TRNA SYNTHETASE"/>
    <property type="match status" value="1"/>
</dbReference>
<dbReference type="Pfam" id="PF08264">
    <property type="entry name" value="Anticodon_1"/>
    <property type="match status" value="1"/>
</dbReference>
<dbReference type="Pfam" id="PF00133">
    <property type="entry name" value="tRNA-synt_1"/>
    <property type="match status" value="1"/>
</dbReference>
<dbReference type="Pfam" id="PF06827">
    <property type="entry name" value="zf-FPG_IleRS"/>
    <property type="match status" value="1"/>
</dbReference>
<dbReference type="PRINTS" id="PR00984">
    <property type="entry name" value="TRNASYNTHILE"/>
</dbReference>
<dbReference type="SUPFAM" id="SSF47323">
    <property type="entry name" value="Anticodon-binding domain of a subclass of class I aminoacyl-tRNA synthetases"/>
    <property type="match status" value="1"/>
</dbReference>
<dbReference type="SUPFAM" id="SSF52374">
    <property type="entry name" value="Nucleotidylyl transferase"/>
    <property type="match status" value="1"/>
</dbReference>
<dbReference type="SUPFAM" id="SSF50677">
    <property type="entry name" value="ValRS/IleRS/LeuRS editing domain"/>
    <property type="match status" value="1"/>
</dbReference>
<dbReference type="PROSITE" id="PS00178">
    <property type="entry name" value="AA_TRNA_LIGASE_I"/>
    <property type="match status" value="1"/>
</dbReference>
<accession>B9EB60</accession>
<name>SYI_MACCJ</name>
<comment type="function">
    <text evidence="1">Catalyzes the attachment of isoleucine to tRNA(Ile). As IleRS can inadvertently accommodate and process structurally similar amino acids such as valine, to avoid such errors it has two additional distinct tRNA(Ile)-dependent editing activities. One activity is designated as 'pretransfer' editing and involves the hydrolysis of activated Val-AMP. The other activity is designated 'posttransfer' editing and involves deacylation of mischarged Val-tRNA(Ile).</text>
</comment>
<comment type="catalytic activity">
    <reaction evidence="1">
        <text>tRNA(Ile) + L-isoleucine + ATP = L-isoleucyl-tRNA(Ile) + AMP + diphosphate</text>
        <dbReference type="Rhea" id="RHEA:11060"/>
        <dbReference type="Rhea" id="RHEA-COMP:9666"/>
        <dbReference type="Rhea" id="RHEA-COMP:9695"/>
        <dbReference type="ChEBI" id="CHEBI:30616"/>
        <dbReference type="ChEBI" id="CHEBI:33019"/>
        <dbReference type="ChEBI" id="CHEBI:58045"/>
        <dbReference type="ChEBI" id="CHEBI:78442"/>
        <dbReference type="ChEBI" id="CHEBI:78528"/>
        <dbReference type="ChEBI" id="CHEBI:456215"/>
        <dbReference type="EC" id="6.1.1.5"/>
    </reaction>
</comment>
<comment type="cofactor">
    <cofactor evidence="1">
        <name>Zn(2+)</name>
        <dbReference type="ChEBI" id="CHEBI:29105"/>
    </cofactor>
    <text evidence="1">Binds 1 zinc ion per subunit.</text>
</comment>
<comment type="subunit">
    <text evidence="1">Monomer.</text>
</comment>
<comment type="subcellular location">
    <subcellularLocation>
        <location evidence="1">Cytoplasm</location>
    </subcellularLocation>
</comment>
<comment type="domain">
    <text evidence="1">IleRS has two distinct active sites: one for aminoacylation and one for editing. The misactivated valine is translocated from the active site to the editing site, which sterically excludes the correctly activated isoleucine. The single editing site contains two valyl binding pockets, one specific for each substrate (Val-AMP or Val-tRNA(Ile)).</text>
</comment>
<comment type="similarity">
    <text evidence="1">Belongs to the class-I aminoacyl-tRNA synthetase family. IleS type 1 subfamily.</text>
</comment>
<proteinExistence type="inferred from homology"/>
<sequence length="914" mass="104435">MDYKDTLLMPKTDFPMRGGLPNKEPQIQAQWDEKKLYEKILKKNEGRTPYILHDGPPYANGQIHMGHALNKIIKDMIMRYKAMNGYYAPYVPGWDTHGLPIETALTKKGVDRKSMSEAEFRELCRAYALEQIELQKADFKRLGVNGDWENPYITLQEKFEAEQIRLFGDMAAKGYIYKGKKPVYWSPSSESSLAEAEIEYQDKVSPSIYVAFDVLDGKGLVDDDVKFVIWTTTPWTLPANVAIALNKDLDYVQVRVNDTSYIVAQALLDNVCDAVGWDKEGVQIEKTFKGADLEFVKARHPFIDRESLIILGDHVTTDAGTGCVHTAPGHGEDDFIVGQKYELDVISPVDGKGVYTSEAGEFEGMYYDKANKVITEKLEASGHLLKLDFFKHSYPHDWRTKKPVIFRATPQWFASINKVRQDILNAIEETEFKVEWGKTRIYNMIRDRGDWVISRQRVWGVPLPVFYAENGDIIMDKAVIEHVATLVEKHGTNVWYEREATDLLPEGYTHPGSPNGVFTKEKDIMDVWFDSGSSHRGVLEARPELSFPADLYFEGSDQYRGWFNSSITTAVATRGKSPYKKLLSHGFVMDGQGRKMSKSLGNTVLPEKVVKQMGADIIRLWVMSVDYLADVRISDDILKQVSEVYRKIRNTFKFLLGNVNDFNPATDAVPYAELVEIDQFMLNKLYTFVNNAHKHYDNNDYLFMYQELQNFINVELSNFYLDYGKDILYIEAQDSHVRRSMQTVVYEVLTSLTKVLAPIIPHTADEIWSHTPHVTEESVHLADMPEVQSVDTALIGKWNHFLEIRDDVLKAIEETRNDKVIGKSLEAAVYIQAKNEEDQALLKSFDNLHQLFITSYAEVVDEPQGTDYNLSNVLVKHAEGEKCERCWNYSTVLTEESHAHPHVCPRCLSVLESK</sequence>
<evidence type="ECO:0000255" key="1">
    <source>
        <dbReference type="HAMAP-Rule" id="MF_02002"/>
    </source>
</evidence>
<feature type="chain" id="PRO_1000189180" description="Isoleucine--tRNA ligase">
    <location>
        <begin position="1"/>
        <end position="914"/>
    </location>
</feature>
<feature type="short sequence motif" description="'HIGH' region">
    <location>
        <begin position="57"/>
        <end position="67"/>
    </location>
</feature>
<feature type="short sequence motif" description="'KMSKS' region">
    <location>
        <begin position="595"/>
        <end position="599"/>
    </location>
</feature>
<feature type="binding site" evidence="1">
    <location>
        <position position="554"/>
    </location>
    <ligand>
        <name>L-isoleucyl-5'-AMP</name>
        <dbReference type="ChEBI" id="CHEBI:178002"/>
    </ligand>
</feature>
<feature type="binding site" evidence="1">
    <location>
        <position position="598"/>
    </location>
    <ligand>
        <name>ATP</name>
        <dbReference type="ChEBI" id="CHEBI:30616"/>
    </ligand>
</feature>
<feature type="binding site" evidence="1">
    <location>
        <position position="883"/>
    </location>
    <ligand>
        <name>Zn(2+)</name>
        <dbReference type="ChEBI" id="CHEBI:29105"/>
    </ligand>
</feature>
<feature type="binding site" evidence="1">
    <location>
        <position position="886"/>
    </location>
    <ligand>
        <name>Zn(2+)</name>
        <dbReference type="ChEBI" id="CHEBI:29105"/>
    </ligand>
</feature>
<feature type="binding site" evidence="1">
    <location>
        <position position="904"/>
    </location>
    <ligand>
        <name>Zn(2+)</name>
        <dbReference type="ChEBI" id="CHEBI:29105"/>
    </ligand>
</feature>
<feature type="binding site" evidence="1">
    <location>
        <position position="907"/>
    </location>
    <ligand>
        <name>Zn(2+)</name>
        <dbReference type="ChEBI" id="CHEBI:29105"/>
    </ligand>
</feature>
<protein>
    <recommendedName>
        <fullName evidence="1">Isoleucine--tRNA ligase</fullName>
        <ecNumber evidence="1">6.1.1.5</ecNumber>
    </recommendedName>
    <alternativeName>
        <fullName evidence="1">Isoleucyl-tRNA synthetase</fullName>
        <shortName evidence="1">IleRS</shortName>
    </alternativeName>
</protein>
<reference key="1">
    <citation type="journal article" date="2009" name="J. Bacteriol.">
        <title>Complete genome sequence of Macrococcus caseolyticus strain JCSCS5402, reflecting the ancestral genome of the human-pathogenic staphylococci.</title>
        <authorList>
            <person name="Baba T."/>
            <person name="Kuwahara-Arai K."/>
            <person name="Uchiyama I."/>
            <person name="Takeuchi F."/>
            <person name="Ito T."/>
            <person name="Hiramatsu K."/>
        </authorList>
    </citation>
    <scope>NUCLEOTIDE SEQUENCE [LARGE SCALE GENOMIC DNA]</scope>
    <source>
        <strain>JCSC5402</strain>
    </source>
</reference>
<keyword id="KW-0030">Aminoacyl-tRNA synthetase</keyword>
<keyword id="KW-0067">ATP-binding</keyword>
<keyword id="KW-0963">Cytoplasm</keyword>
<keyword id="KW-0436">Ligase</keyword>
<keyword id="KW-0479">Metal-binding</keyword>
<keyword id="KW-0547">Nucleotide-binding</keyword>
<keyword id="KW-0648">Protein biosynthesis</keyword>
<keyword id="KW-1185">Reference proteome</keyword>
<keyword id="KW-0862">Zinc</keyword>
<organism>
    <name type="scientific">Macrococcus caseolyticus (strain JCSC5402)</name>
    <name type="common">Macrococcoides caseolyticum</name>
    <dbReference type="NCBI Taxonomy" id="458233"/>
    <lineage>
        <taxon>Bacteria</taxon>
        <taxon>Bacillati</taxon>
        <taxon>Bacillota</taxon>
        <taxon>Bacilli</taxon>
        <taxon>Bacillales</taxon>
        <taxon>Staphylococcaceae</taxon>
        <taxon>Macrococcoides</taxon>
    </lineage>
</organism>